<feature type="chain" id="PRO_0000104460" description="Large ribosomal subunit protein uL11">
    <location>
        <begin position="1"/>
        <end position="165"/>
    </location>
</feature>
<feature type="splice variant" id="VSP_020725" description="In isoform c." evidence="2">
    <location>
        <begin position="1"/>
        <end position="115"/>
    </location>
</feature>
<name>RL12_CAEEL</name>
<protein>
    <recommendedName>
        <fullName evidence="2">Large ribosomal subunit protein uL11</fullName>
    </recommendedName>
    <alternativeName>
        <fullName>60S ribosomal protein L12</fullName>
    </alternativeName>
</protein>
<evidence type="ECO:0000250" key="1"/>
<evidence type="ECO:0000305" key="2"/>
<proteinExistence type="inferred from homology"/>
<gene>
    <name type="primary">rpl-12</name>
    <name type="ORF">JC8.3</name>
</gene>
<organism>
    <name type="scientific">Caenorhabditis elegans</name>
    <dbReference type="NCBI Taxonomy" id="6239"/>
    <lineage>
        <taxon>Eukaryota</taxon>
        <taxon>Metazoa</taxon>
        <taxon>Ecdysozoa</taxon>
        <taxon>Nematoda</taxon>
        <taxon>Chromadorea</taxon>
        <taxon>Rhabditida</taxon>
        <taxon>Rhabditina</taxon>
        <taxon>Rhabditomorpha</taxon>
        <taxon>Rhabditoidea</taxon>
        <taxon>Rhabditidae</taxon>
        <taxon>Peloderinae</taxon>
        <taxon>Caenorhabditis</taxon>
    </lineage>
</organism>
<comment type="function">
    <text evidence="1">Binds directly to 26S ribosomal RNA.</text>
</comment>
<comment type="alternative products">
    <event type="alternative splicing"/>
    <isoform>
        <id>P61866-1</id>
        <name>a</name>
        <sequence type="displayed"/>
    </isoform>
    <isoform>
        <id>P61866-2</id>
        <name>c</name>
        <sequence type="described" ref="VSP_020725"/>
    </isoform>
</comment>
<comment type="similarity">
    <text evidence="2">Belongs to the universal ribosomal protein uL11 family.</text>
</comment>
<accession>P61866</accession>
<accession>O62290</accession>
<accession>Q2EEM7</accession>
<sequence>MPPKFDPTEIKIVYLRCVGGEVGATSALAPKVGPLGLSPKKIGEDIAKATQDWKGLKVTCKLTIQNRVAKIDVVPSAASLIVKELKEPPRDRKKVKNVKHNGDLTVDTIIKIARIMRPRSMAKKLEGTVKEILGTAQSVGCTIDGQHPHDIIESIANGEIEIPAQ</sequence>
<reference key="1">
    <citation type="journal article" date="1998" name="Science">
        <title>Genome sequence of the nematode C. elegans: a platform for investigating biology.</title>
        <authorList>
            <consortium name="The C. elegans sequencing consortium"/>
        </authorList>
    </citation>
    <scope>NUCLEOTIDE SEQUENCE [LARGE SCALE GENOMIC DNA]</scope>
    <scope>ALTERNATIVE SPLICING</scope>
    <source>
        <strain>Bristol N2</strain>
    </source>
</reference>
<keyword id="KW-0025">Alternative splicing</keyword>
<keyword id="KW-1185">Reference proteome</keyword>
<keyword id="KW-0687">Ribonucleoprotein</keyword>
<keyword id="KW-0689">Ribosomal protein</keyword>
<keyword id="KW-0694">RNA-binding</keyword>
<dbReference type="EMBL" id="Z82274">
    <property type="protein sequence ID" value="CAB05226.1"/>
    <property type="molecule type" value="Genomic_DNA"/>
</dbReference>
<dbReference type="EMBL" id="Z82274">
    <property type="protein sequence ID" value="CAJ76933.1"/>
    <property type="molecule type" value="Genomic_DNA"/>
</dbReference>
<dbReference type="PIR" id="T23150">
    <property type="entry name" value="T23150"/>
</dbReference>
<dbReference type="RefSeq" id="NP_001040960.1">
    <property type="nucleotide sequence ID" value="NM_001047495.4"/>
</dbReference>
<dbReference type="RefSeq" id="NP_502542.1">
    <molecule id="P61866-1"/>
    <property type="nucleotide sequence ID" value="NM_070141.10"/>
</dbReference>
<dbReference type="SMR" id="P61866"/>
<dbReference type="BioGRID" id="43368">
    <property type="interactions" value="88"/>
</dbReference>
<dbReference type="DIP" id="DIP-26259N"/>
<dbReference type="FunCoup" id="P61866">
    <property type="interactions" value="1541"/>
</dbReference>
<dbReference type="IntAct" id="P61866">
    <property type="interactions" value="1"/>
</dbReference>
<dbReference type="STRING" id="6239.JC8.3a.1"/>
<dbReference type="MoonProt" id="P61866"/>
<dbReference type="iPTMnet" id="P61866"/>
<dbReference type="PaxDb" id="6239-JC8.3a"/>
<dbReference type="EnsemblMetazoa" id="JC8.3a.1">
    <molecule id="P61866-1"/>
    <property type="protein sequence ID" value="JC8.3a.1"/>
    <property type="gene ID" value="WBGene00004424"/>
</dbReference>
<dbReference type="EnsemblMetazoa" id="JC8.3c.1">
    <molecule id="P61866-2"/>
    <property type="protein sequence ID" value="JC8.3c.1"/>
    <property type="gene ID" value="WBGene00004424"/>
</dbReference>
<dbReference type="GeneID" id="178279"/>
<dbReference type="KEGG" id="cel:CELE_JC8.3"/>
<dbReference type="UCSC" id="JC8.3a.2">
    <molecule id="P61866-1"/>
    <property type="organism name" value="c. elegans"/>
</dbReference>
<dbReference type="AGR" id="WB:WBGene00004424"/>
<dbReference type="CTD" id="178279"/>
<dbReference type="WormBase" id="JC8.3a">
    <molecule id="P61866-1"/>
    <property type="protein sequence ID" value="CE17986"/>
    <property type="gene ID" value="WBGene00004424"/>
    <property type="gene designation" value="rpl-12"/>
</dbReference>
<dbReference type="WormBase" id="JC8.3c">
    <molecule id="P61866-2"/>
    <property type="protein sequence ID" value="CE39743"/>
    <property type="gene ID" value="WBGene00004424"/>
    <property type="gene designation" value="rpl-12"/>
</dbReference>
<dbReference type="eggNOG" id="KOG0886">
    <property type="taxonomic scope" value="Eukaryota"/>
</dbReference>
<dbReference type="GeneTree" id="ENSGT00390000006922"/>
<dbReference type="HOGENOM" id="CLU_074237_5_0_1"/>
<dbReference type="InParanoid" id="P61866"/>
<dbReference type="OMA" id="VILEESC"/>
<dbReference type="OrthoDB" id="1478556at2759"/>
<dbReference type="PhylomeDB" id="P61866"/>
<dbReference type="Reactome" id="R-CEL-156827">
    <property type="pathway name" value="L13a-mediated translational silencing of Ceruloplasmin expression"/>
</dbReference>
<dbReference type="Reactome" id="R-CEL-1799339">
    <property type="pathway name" value="SRP-dependent cotranslational protein targeting to membrane"/>
</dbReference>
<dbReference type="Reactome" id="R-CEL-72689">
    <property type="pathway name" value="Formation of a pool of free 40S subunits"/>
</dbReference>
<dbReference type="Reactome" id="R-CEL-72706">
    <property type="pathway name" value="GTP hydrolysis and joining of the 60S ribosomal subunit"/>
</dbReference>
<dbReference type="Reactome" id="R-CEL-975956">
    <property type="pathway name" value="Nonsense Mediated Decay (NMD) independent of the Exon Junction Complex (EJC)"/>
</dbReference>
<dbReference type="Reactome" id="R-CEL-975957">
    <property type="pathway name" value="Nonsense Mediated Decay (NMD) enhanced by the Exon Junction Complex (EJC)"/>
</dbReference>
<dbReference type="SignaLink" id="P61866"/>
<dbReference type="PRO" id="PR:P61866"/>
<dbReference type="Proteomes" id="UP000001940">
    <property type="component" value="Chromosome IV"/>
</dbReference>
<dbReference type="Bgee" id="WBGene00004424">
    <property type="expression patterns" value="Expressed in material anatomical entity and 5 other cell types or tissues"/>
</dbReference>
<dbReference type="GO" id="GO:0022625">
    <property type="term" value="C:cytosolic large ribosomal subunit"/>
    <property type="evidence" value="ECO:0000318"/>
    <property type="project" value="GO_Central"/>
</dbReference>
<dbReference type="GO" id="GO:0070180">
    <property type="term" value="F:large ribosomal subunit rRNA binding"/>
    <property type="evidence" value="ECO:0000318"/>
    <property type="project" value="GO_Central"/>
</dbReference>
<dbReference type="GO" id="GO:0003735">
    <property type="term" value="F:structural constituent of ribosome"/>
    <property type="evidence" value="ECO:0000318"/>
    <property type="project" value="GO_Central"/>
</dbReference>
<dbReference type="GO" id="GO:0000381">
    <property type="term" value="P:regulation of alternative mRNA splicing, via spliceosome"/>
    <property type="evidence" value="ECO:0000314"/>
    <property type="project" value="CAFA"/>
</dbReference>
<dbReference type="GO" id="GO:0006412">
    <property type="term" value="P:translation"/>
    <property type="evidence" value="ECO:0000318"/>
    <property type="project" value="GO_Central"/>
</dbReference>
<dbReference type="CDD" id="cd00349">
    <property type="entry name" value="Ribosomal_L11"/>
    <property type="match status" value="1"/>
</dbReference>
<dbReference type="FunFam" id="1.10.10.250:FF:000002">
    <property type="entry name" value="60S ribosomal protein L12"/>
    <property type="match status" value="1"/>
</dbReference>
<dbReference type="FunFam" id="3.30.1550.10:FF:000002">
    <property type="entry name" value="60S ribosomal protein L12"/>
    <property type="match status" value="1"/>
</dbReference>
<dbReference type="Gene3D" id="1.10.10.250">
    <property type="entry name" value="Ribosomal protein L11, C-terminal domain"/>
    <property type="match status" value="1"/>
</dbReference>
<dbReference type="Gene3D" id="3.30.1550.10">
    <property type="entry name" value="Ribosomal protein L11/L12, N-terminal domain"/>
    <property type="match status" value="1"/>
</dbReference>
<dbReference type="HAMAP" id="MF_00736">
    <property type="entry name" value="Ribosomal_uL11"/>
    <property type="match status" value="1"/>
</dbReference>
<dbReference type="InterPro" id="IPR000911">
    <property type="entry name" value="Ribosomal_uL11"/>
</dbReference>
<dbReference type="InterPro" id="IPR020783">
    <property type="entry name" value="Ribosomal_uL11_C"/>
</dbReference>
<dbReference type="InterPro" id="IPR036769">
    <property type="entry name" value="Ribosomal_uL11_C_sf"/>
</dbReference>
<dbReference type="InterPro" id="IPR020785">
    <property type="entry name" value="Ribosomal_uL11_CS"/>
</dbReference>
<dbReference type="InterPro" id="IPR020784">
    <property type="entry name" value="Ribosomal_uL11_N"/>
</dbReference>
<dbReference type="InterPro" id="IPR036796">
    <property type="entry name" value="Ribosomal_uL11_N_sf"/>
</dbReference>
<dbReference type="PANTHER" id="PTHR11661">
    <property type="entry name" value="60S RIBOSOMAL PROTEIN L12"/>
    <property type="match status" value="1"/>
</dbReference>
<dbReference type="PANTHER" id="PTHR11661:SF2">
    <property type="entry name" value="LARGE RIBOSOMAL SUBUNIT PROTEIN UL11"/>
    <property type="match status" value="1"/>
</dbReference>
<dbReference type="Pfam" id="PF00298">
    <property type="entry name" value="Ribosomal_L11"/>
    <property type="match status" value="1"/>
</dbReference>
<dbReference type="Pfam" id="PF03946">
    <property type="entry name" value="Ribosomal_L11_N"/>
    <property type="match status" value="1"/>
</dbReference>
<dbReference type="SMART" id="SM00649">
    <property type="entry name" value="RL11"/>
    <property type="match status" value="1"/>
</dbReference>
<dbReference type="SUPFAM" id="SSF54747">
    <property type="entry name" value="Ribosomal L11/L12e N-terminal domain"/>
    <property type="match status" value="1"/>
</dbReference>
<dbReference type="SUPFAM" id="SSF46906">
    <property type="entry name" value="Ribosomal protein L11, C-terminal domain"/>
    <property type="match status" value="1"/>
</dbReference>
<dbReference type="PROSITE" id="PS00359">
    <property type="entry name" value="RIBOSOMAL_L11"/>
    <property type="match status" value="1"/>
</dbReference>